<sequence>MAQIDFRKKINWHRRYRSPQGVKTEHEILRIFESDRGRIINSPAIRRLQQKTQVFPLERNAAVRTRLTHSMEVQQVGRYIAKEILSRLKELKLLEAYGLDELTGPFESIVEMSCLMHDIGNPPFGHFGEAAINDWFRQRLYPEDAESQPLTDDRCSVAALRLRDGEEPLNELRRKIRQDLCHFEGNAQGIRLVHTLMRMNLTWAQVGGILKYTRPAWWRGETPETHHYLMKKPGYYLSEEAYIARLRKELNLALYSRFPLTWIMEAADDISYCVADLEDAVEKRIFTVEQLYHHLHEAWGQHEKGSLFSLVVENAWEKSRSNSLSRSTEDQFFMYLRVNTLNKLVPYAAQRFIDNLPAIFAGTFNHALLEDASECSDLLKLYKNVAVKHVFSHPDVEQLELQGYRVISGLLEIYRPLLSLSLSDFTELVEKERVKRFPIESRLFHKLSTRHRLAYVEAVSKLPSDSPEFPLWEYYYRCRLLQDYISGMTDLYAWDEYRRLMAVEQ</sequence>
<organism>
    <name type="scientific">Escherichia coli (strain 55989 / EAEC)</name>
    <dbReference type="NCBI Taxonomy" id="585055"/>
    <lineage>
        <taxon>Bacteria</taxon>
        <taxon>Pseudomonadati</taxon>
        <taxon>Pseudomonadota</taxon>
        <taxon>Gammaproteobacteria</taxon>
        <taxon>Enterobacterales</taxon>
        <taxon>Enterobacteriaceae</taxon>
        <taxon>Escherichia</taxon>
    </lineage>
</organism>
<comment type="function">
    <text evidence="1">dGTPase preferentially hydrolyzes dGTP over the other canonical NTPs.</text>
</comment>
<comment type="catalytic activity">
    <reaction evidence="1">
        <text>dGTP + H2O = 2'-deoxyguanosine + triphosphate + H(+)</text>
        <dbReference type="Rhea" id="RHEA:15193"/>
        <dbReference type="ChEBI" id="CHEBI:15377"/>
        <dbReference type="ChEBI" id="CHEBI:15378"/>
        <dbReference type="ChEBI" id="CHEBI:17172"/>
        <dbReference type="ChEBI" id="CHEBI:18036"/>
        <dbReference type="ChEBI" id="CHEBI:61429"/>
        <dbReference type="EC" id="3.1.5.1"/>
    </reaction>
</comment>
<comment type="cofactor">
    <cofactor evidence="1">
        <name>Mg(2+)</name>
        <dbReference type="ChEBI" id="CHEBI:18420"/>
    </cofactor>
</comment>
<comment type="subunit">
    <text evidence="1">Homotetramer.</text>
</comment>
<comment type="similarity">
    <text evidence="1">Belongs to the dGTPase family. Type 1 subfamily.</text>
</comment>
<proteinExistence type="inferred from homology"/>
<gene>
    <name evidence="1" type="primary">dgt</name>
    <name type="ordered locus">EC55989_0155</name>
</gene>
<feature type="chain" id="PRO_1000116916" description="Deoxyguanosinetriphosphate triphosphohydrolase">
    <location>
        <begin position="1"/>
        <end position="505"/>
    </location>
</feature>
<feature type="domain" description="HD" evidence="2">
    <location>
        <begin position="66"/>
        <end position="273"/>
    </location>
</feature>
<dbReference type="EC" id="3.1.5.1" evidence="1"/>
<dbReference type="EMBL" id="CU928145">
    <property type="protein sequence ID" value="CAU96041.1"/>
    <property type="molecule type" value="Genomic_DNA"/>
</dbReference>
<dbReference type="RefSeq" id="WP_000057094.1">
    <property type="nucleotide sequence ID" value="NC_011748.1"/>
</dbReference>
<dbReference type="SMR" id="B7LGM2"/>
<dbReference type="GeneID" id="75202025"/>
<dbReference type="KEGG" id="eck:EC55989_0155"/>
<dbReference type="HOGENOM" id="CLU_028163_2_1_6"/>
<dbReference type="Proteomes" id="UP000000746">
    <property type="component" value="Chromosome"/>
</dbReference>
<dbReference type="GO" id="GO:0008832">
    <property type="term" value="F:dGTPase activity"/>
    <property type="evidence" value="ECO:0007669"/>
    <property type="project" value="UniProtKB-UniRule"/>
</dbReference>
<dbReference type="GO" id="GO:0000287">
    <property type="term" value="F:magnesium ion binding"/>
    <property type="evidence" value="ECO:0007669"/>
    <property type="project" value="UniProtKB-UniRule"/>
</dbReference>
<dbReference type="GO" id="GO:0006203">
    <property type="term" value="P:dGTP catabolic process"/>
    <property type="evidence" value="ECO:0007669"/>
    <property type="project" value="InterPro"/>
</dbReference>
<dbReference type="CDD" id="cd00077">
    <property type="entry name" value="HDc"/>
    <property type="match status" value="1"/>
</dbReference>
<dbReference type="FunFam" id="1.10.3210.10:FF:000009">
    <property type="entry name" value="Deoxyguanosinetriphosphate triphosphohydrolase"/>
    <property type="match status" value="1"/>
</dbReference>
<dbReference type="FunFam" id="1.10.3210.10:FF:000010">
    <property type="entry name" value="Deoxyguanosinetriphosphate triphosphohydrolase"/>
    <property type="match status" value="1"/>
</dbReference>
<dbReference type="FunFam" id="1.10.3410.10:FF:000001">
    <property type="entry name" value="Deoxyguanosinetriphosphate triphosphohydrolase"/>
    <property type="match status" value="1"/>
</dbReference>
<dbReference type="Gene3D" id="1.10.3210.10">
    <property type="entry name" value="Hypothetical protein af1432"/>
    <property type="match status" value="2"/>
</dbReference>
<dbReference type="Gene3D" id="1.10.3410.10">
    <property type="entry name" value="putative deoxyguanosinetriphosphate triphosphohydrolase like domain"/>
    <property type="match status" value="1"/>
</dbReference>
<dbReference type="HAMAP" id="MF_00030">
    <property type="entry name" value="dGTPase_type1"/>
    <property type="match status" value="1"/>
</dbReference>
<dbReference type="InterPro" id="IPR023293">
    <property type="entry name" value="dGTP_triP_hydro_central_sf"/>
</dbReference>
<dbReference type="InterPro" id="IPR006261">
    <property type="entry name" value="dGTPase"/>
</dbReference>
<dbReference type="InterPro" id="IPR050135">
    <property type="entry name" value="dGTPase-like"/>
</dbReference>
<dbReference type="InterPro" id="IPR020779">
    <property type="entry name" value="dNTPase_1"/>
</dbReference>
<dbReference type="InterPro" id="IPR003607">
    <property type="entry name" value="HD/PDEase_dom"/>
</dbReference>
<dbReference type="InterPro" id="IPR006674">
    <property type="entry name" value="HD_domain"/>
</dbReference>
<dbReference type="NCBIfam" id="TIGR01353">
    <property type="entry name" value="dGTP_triPase"/>
    <property type="match status" value="1"/>
</dbReference>
<dbReference type="NCBIfam" id="NF003429">
    <property type="entry name" value="PRK04926.1"/>
    <property type="match status" value="1"/>
</dbReference>
<dbReference type="PANTHER" id="PTHR11373:SF32">
    <property type="entry name" value="DEOXYGUANOSINETRIPHOSPHATE TRIPHOSPHOHYDROLASE"/>
    <property type="match status" value="1"/>
</dbReference>
<dbReference type="PANTHER" id="PTHR11373">
    <property type="entry name" value="DEOXYNUCLEOSIDE TRIPHOSPHATE TRIPHOSPHOHYDROLASE"/>
    <property type="match status" value="1"/>
</dbReference>
<dbReference type="Pfam" id="PF01966">
    <property type="entry name" value="HD"/>
    <property type="match status" value="1"/>
</dbReference>
<dbReference type="SMART" id="SM00471">
    <property type="entry name" value="HDc"/>
    <property type="match status" value="1"/>
</dbReference>
<dbReference type="SUPFAM" id="SSF109604">
    <property type="entry name" value="HD-domain/PDEase-like"/>
    <property type="match status" value="1"/>
</dbReference>
<dbReference type="PROSITE" id="PS51831">
    <property type="entry name" value="HD"/>
    <property type="match status" value="1"/>
</dbReference>
<name>DGTP_ECO55</name>
<keyword id="KW-0378">Hydrolase</keyword>
<keyword id="KW-0460">Magnesium</keyword>
<keyword id="KW-1185">Reference proteome</keyword>
<evidence type="ECO:0000255" key="1">
    <source>
        <dbReference type="HAMAP-Rule" id="MF_00030"/>
    </source>
</evidence>
<evidence type="ECO:0000255" key="2">
    <source>
        <dbReference type="PROSITE-ProRule" id="PRU01175"/>
    </source>
</evidence>
<protein>
    <recommendedName>
        <fullName evidence="1">Deoxyguanosinetriphosphate triphosphohydrolase</fullName>
        <shortName evidence="1">dGTP triphosphohydrolase</shortName>
        <shortName evidence="1">dGTPase</shortName>
        <ecNumber evidence="1">3.1.5.1</ecNumber>
    </recommendedName>
</protein>
<accession>B7LGM2</accession>
<reference key="1">
    <citation type="journal article" date="2009" name="PLoS Genet.">
        <title>Organised genome dynamics in the Escherichia coli species results in highly diverse adaptive paths.</title>
        <authorList>
            <person name="Touchon M."/>
            <person name="Hoede C."/>
            <person name="Tenaillon O."/>
            <person name="Barbe V."/>
            <person name="Baeriswyl S."/>
            <person name="Bidet P."/>
            <person name="Bingen E."/>
            <person name="Bonacorsi S."/>
            <person name="Bouchier C."/>
            <person name="Bouvet O."/>
            <person name="Calteau A."/>
            <person name="Chiapello H."/>
            <person name="Clermont O."/>
            <person name="Cruveiller S."/>
            <person name="Danchin A."/>
            <person name="Diard M."/>
            <person name="Dossat C."/>
            <person name="Karoui M.E."/>
            <person name="Frapy E."/>
            <person name="Garry L."/>
            <person name="Ghigo J.M."/>
            <person name="Gilles A.M."/>
            <person name="Johnson J."/>
            <person name="Le Bouguenec C."/>
            <person name="Lescat M."/>
            <person name="Mangenot S."/>
            <person name="Martinez-Jehanne V."/>
            <person name="Matic I."/>
            <person name="Nassif X."/>
            <person name="Oztas S."/>
            <person name="Petit M.A."/>
            <person name="Pichon C."/>
            <person name="Rouy Z."/>
            <person name="Ruf C.S."/>
            <person name="Schneider D."/>
            <person name="Tourret J."/>
            <person name="Vacherie B."/>
            <person name="Vallenet D."/>
            <person name="Medigue C."/>
            <person name="Rocha E.P.C."/>
            <person name="Denamur E."/>
        </authorList>
    </citation>
    <scope>NUCLEOTIDE SEQUENCE [LARGE SCALE GENOMIC DNA]</scope>
    <source>
        <strain>55989 / EAEC</strain>
    </source>
</reference>